<name>JAL14_ARATH</name>
<keyword id="KW-0430">Lectin</keyword>
<keyword id="KW-1185">Reference proteome</keyword>
<keyword id="KW-0677">Repeat</keyword>
<feature type="chain" id="PRO_0000430381" description="Jacalin-related lectin 14">
    <location>
        <begin position="1"/>
        <end position="614"/>
    </location>
</feature>
<feature type="domain" description="Jacalin-type lectin 1" evidence="1">
    <location>
        <begin position="27"/>
        <end position="169"/>
    </location>
</feature>
<feature type="domain" description="Jacalin-type lectin 2" evidence="1">
    <location>
        <begin position="172"/>
        <end position="314"/>
    </location>
</feature>
<feature type="domain" description="Jacalin-type lectin 3" evidence="1">
    <location>
        <begin position="317"/>
        <end position="462"/>
    </location>
</feature>
<feature type="domain" description="Jacalin-type lectin 4" evidence="1">
    <location>
        <begin position="468"/>
        <end position="611"/>
    </location>
</feature>
<feature type="sequence conflict" description="In Ref. 3; BAF00985." evidence="2" ref="3">
    <original>I</original>
    <variation>V</variation>
    <location>
        <position position="148"/>
    </location>
</feature>
<feature type="sequence conflict" description="In Ref. 3; BAF00985." evidence="2" ref="3">
    <original>G</original>
    <variation>R</variation>
    <location>
        <position position="224"/>
    </location>
</feature>
<feature type="sequence conflict" description="In Ref. 3; BAF00985." evidence="2" ref="3">
    <original>N</original>
    <variation>I</variation>
    <location>
        <position position="523"/>
    </location>
</feature>
<proteinExistence type="evidence at transcript level"/>
<reference key="1">
    <citation type="journal article" date="2000" name="Nature">
        <title>Sequence and analysis of chromosome 1 of the plant Arabidopsis thaliana.</title>
        <authorList>
            <person name="Theologis A."/>
            <person name="Ecker J.R."/>
            <person name="Palm C.J."/>
            <person name="Federspiel N.A."/>
            <person name="Kaul S."/>
            <person name="White O."/>
            <person name="Alonso J."/>
            <person name="Altafi H."/>
            <person name="Araujo R."/>
            <person name="Bowman C.L."/>
            <person name="Brooks S.Y."/>
            <person name="Buehler E."/>
            <person name="Chan A."/>
            <person name="Chao Q."/>
            <person name="Chen H."/>
            <person name="Cheuk R.F."/>
            <person name="Chin C.W."/>
            <person name="Chung M.K."/>
            <person name="Conn L."/>
            <person name="Conway A.B."/>
            <person name="Conway A.R."/>
            <person name="Creasy T.H."/>
            <person name="Dewar K."/>
            <person name="Dunn P."/>
            <person name="Etgu P."/>
            <person name="Feldblyum T.V."/>
            <person name="Feng J.-D."/>
            <person name="Fong B."/>
            <person name="Fujii C.Y."/>
            <person name="Gill J.E."/>
            <person name="Goldsmith A.D."/>
            <person name="Haas B."/>
            <person name="Hansen N.F."/>
            <person name="Hughes B."/>
            <person name="Huizar L."/>
            <person name="Hunter J.L."/>
            <person name="Jenkins J."/>
            <person name="Johnson-Hopson C."/>
            <person name="Khan S."/>
            <person name="Khaykin E."/>
            <person name="Kim C.J."/>
            <person name="Koo H.L."/>
            <person name="Kremenetskaia I."/>
            <person name="Kurtz D.B."/>
            <person name="Kwan A."/>
            <person name="Lam B."/>
            <person name="Langin-Hooper S."/>
            <person name="Lee A."/>
            <person name="Lee J.M."/>
            <person name="Lenz C.A."/>
            <person name="Li J.H."/>
            <person name="Li Y.-P."/>
            <person name="Lin X."/>
            <person name="Liu S.X."/>
            <person name="Liu Z.A."/>
            <person name="Luros J.S."/>
            <person name="Maiti R."/>
            <person name="Marziali A."/>
            <person name="Militscher J."/>
            <person name="Miranda M."/>
            <person name="Nguyen M."/>
            <person name="Nierman W.C."/>
            <person name="Osborne B.I."/>
            <person name="Pai G."/>
            <person name="Peterson J."/>
            <person name="Pham P.K."/>
            <person name="Rizzo M."/>
            <person name="Rooney T."/>
            <person name="Rowley D."/>
            <person name="Sakano H."/>
            <person name="Salzberg S.L."/>
            <person name="Schwartz J.R."/>
            <person name="Shinn P."/>
            <person name="Southwick A.M."/>
            <person name="Sun H."/>
            <person name="Tallon L.J."/>
            <person name="Tambunga G."/>
            <person name="Toriumi M.J."/>
            <person name="Town C.D."/>
            <person name="Utterback T."/>
            <person name="Van Aken S."/>
            <person name="Vaysberg M."/>
            <person name="Vysotskaia V.S."/>
            <person name="Walker M."/>
            <person name="Wu D."/>
            <person name="Yu G."/>
            <person name="Fraser C.M."/>
            <person name="Venter J.C."/>
            <person name="Davis R.W."/>
        </authorList>
    </citation>
    <scope>NUCLEOTIDE SEQUENCE [LARGE SCALE GENOMIC DNA]</scope>
    <source>
        <strain>cv. Columbia</strain>
    </source>
</reference>
<reference key="2">
    <citation type="journal article" date="2017" name="Plant J.">
        <title>Araport11: a complete reannotation of the Arabidopsis thaliana reference genome.</title>
        <authorList>
            <person name="Cheng C.Y."/>
            <person name="Krishnakumar V."/>
            <person name="Chan A.P."/>
            <person name="Thibaud-Nissen F."/>
            <person name="Schobel S."/>
            <person name="Town C.D."/>
        </authorList>
    </citation>
    <scope>GENOME REANNOTATION</scope>
    <source>
        <strain>cv. Columbia</strain>
    </source>
</reference>
<reference key="3">
    <citation type="submission" date="2006-07" db="EMBL/GenBank/DDBJ databases">
        <title>Large-scale analysis of RIKEN Arabidopsis full-length (RAFL) cDNAs.</title>
        <authorList>
            <person name="Totoki Y."/>
            <person name="Seki M."/>
            <person name="Ishida J."/>
            <person name="Nakajima M."/>
            <person name="Enju A."/>
            <person name="Kamiya A."/>
            <person name="Narusaka M."/>
            <person name="Shin-i T."/>
            <person name="Nakagawa M."/>
            <person name="Sakamoto N."/>
            <person name="Oishi K."/>
            <person name="Kohara Y."/>
            <person name="Kobayashi M."/>
            <person name="Toyoda A."/>
            <person name="Sakaki Y."/>
            <person name="Sakurai T."/>
            <person name="Iida K."/>
            <person name="Akiyama K."/>
            <person name="Satou M."/>
            <person name="Toyoda T."/>
            <person name="Konagaya A."/>
            <person name="Carninci P."/>
            <person name="Kawai J."/>
            <person name="Hayashizaki Y."/>
            <person name="Shinozaki K."/>
        </authorList>
    </citation>
    <scope>NUCLEOTIDE SEQUENCE [LARGE SCALE MRNA]</scope>
    <source>
        <strain>cv. Columbia</strain>
    </source>
</reference>
<reference key="4">
    <citation type="journal article" date="2008" name="Plant Cell Physiol.">
        <title>Antagonistic jacalin-related lectins regulate the size of ER body-type beta-glucosidase complexes in Arabidopsis thaliana.</title>
        <authorList>
            <person name="Nagano A.J."/>
            <person name="Fukao Y."/>
            <person name="Fujiwara M."/>
            <person name="Nishimura M."/>
            <person name="Hara-Nishimura I."/>
        </authorList>
    </citation>
    <scope>GENE FAMILY</scope>
    <scope>NOMENCLATURE</scope>
</reference>
<dbReference type="EMBL" id="AC079733">
    <property type="protein sequence ID" value="AAG50741.1"/>
    <property type="status" value="ALT_SEQ"/>
    <property type="molecule type" value="Genomic_DNA"/>
</dbReference>
<dbReference type="EMBL" id="CP002684">
    <property type="protein sequence ID" value="AEE33437.1"/>
    <property type="molecule type" value="Genomic_DNA"/>
</dbReference>
<dbReference type="EMBL" id="AK229108">
    <property type="protein sequence ID" value="BAF00985.1"/>
    <property type="molecule type" value="mRNA"/>
</dbReference>
<dbReference type="PIR" id="G96609">
    <property type="entry name" value="G96609"/>
</dbReference>
<dbReference type="RefSeq" id="NP_176070.2">
    <property type="nucleotide sequence ID" value="NM_104554.4"/>
</dbReference>
<dbReference type="SMR" id="F4I837"/>
<dbReference type="FunCoup" id="F4I837">
    <property type="interactions" value="1"/>
</dbReference>
<dbReference type="STRING" id="3702.F4I837"/>
<dbReference type="PaxDb" id="3702-AT1G57570.1"/>
<dbReference type="EnsemblPlants" id="AT1G57570.1">
    <property type="protein sequence ID" value="AT1G57570.1"/>
    <property type="gene ID" value="AT1G57570"/>
</dbReference>
<dbReference type="GeneID" id="842133"/>
<dbReference type="Gramene" id="AT1G57570.1">
    <property type="protein sequence ID" value="AT1G57570.1"/>
    <property type="gene ID" value="AT1G57570"/>
</dbReference>
<dbReference type="KEGG" id="ath:AT1G57570"/>
<dbReference type="Araport" id="AT1G57570"/>
<dbReference type="TAIR" id="AT1G57570"/>
<dbReference type="eggNOG" id="ENOG502SCUZ">
    <property type="taxonomic scope" value="Eukaryota"/>
</dbReference>
<dbReference type="HOGENOM" id="CLU_041730_0_0_1"/>
<dbReference type="InParanoid" id="F4I837"/>
<dbReference type="OMA" id="TAVDGCY"/>
<dbReference type="PRO" id="PR:F4I837"/>
<dbReference type="Proteomes" id="UP000006548">
    <property type="component" value="Chromosome 1"/>
</dbReference>
<dbReference type="ExpressionAtlas" id="F4I837">
    <property type="expression patterns" value="baseline and differential"/>
</dbReference>
<dbReference type="GO" id="GO:0030246">
    <property type="term" value="F:carbohydrate binding"/>
    <property type="evidence" value="ECO:0007669"/>
    <property type="project" value="UniProtKB-KW"/>
</dbReference>
<dbReference type="CDD" id="cd09612">
    <property type="entry name" value="Jacalin"/>
    <property type="match status" value="4"/>
</dbReference>
<dbReference type="FunFam" id="2.100.10.30:FF:000001">
    <property type="entry name" value="Jacalin-related lectin 33"/>
    <property type="match status" value="4"/>
</dbReference>
<dbReference type="Gene3D" id="2.100.10.30">
    <property type="entry name" value="Jacalin-like lectin domain"/>
    <property type="match status" value="4"/>
</dbReference>
<dbReference type="InterPro" id="IPR001229">
    <property type="entry name" value="Jacalin-like_lectin_dom"/>
</dbReference>
<dbReference type="InterPro" id="IPR033734">
    <property type="entry name" value="Jacalin-like_lectin_dom_plant"/>
</dbReference>
<dbReference type="InterPro" id="IPR036404">
    <property type="entry name" value="Jacalin-like_lectin_dom_sf"/>
</dbReference>
<dbReference type="PANTHER" id="PTHR47293:SF11">
    <property type="entry name" value="JACALIN-RELATED LECTIN 12-RELATED"/>
    <property type="match status" value="1"/>
</dbReference>
<dbReference type="PANTHER" id="PTHR47293">
    <property type="entry name" value="JACALIN-RELATED LECTIN 3"/>
    <property type="match status" value="1"/>
</dbReference>
<dbReference type="Pfam" id="PF01419">
    <property type="entry name" value="Jacalin"/>
    <property type="match status" value="4"/>
</dbReference>
<dbReference type="SMART" id="SM00915">
    <property type="entry name" value="Jacalin"/>
    <property type="match status" value="4"/>
</dbReference>
<dbReference type="SUPFAM" id="SSF51101">
    <property type="entry name" value="Mannose-binding lectins"/>
    <property type="match status" value="4"/>
</dbReference>
<dbReference type="PROSITE" id="PS51752">
    <property type="entry name" value="JACALIN_LECTIN"/>
    <property type="match status" value="4"/>
</dbReference>
<evidence type="ECO:0000255" key="1">
    <source>
        <dbReference type="PROSITE-ProRule" id="PRU01088"/>
    </source>
</evidence>
<evidence type="ECO:0000305" key="2"/>
<comment type="similarity">
    <text evidence="1 2">Belongs to the jacalin lectin family.</text>
</comment>
<comment type="sequence caution" evidence="2">
    <conflict type="erroneous gene model prediction">
        <sequence resource="EMBL-CDS" id="AAG50741"/>
    </conflict>
</comment>
<organism>
    <name type="scientific">Arabidopsis thaliana</name>
    <name type="common">Mouse-ear cress</name>
    <dbReference type="NCBI Taxonomy" id="3702"/>
    <lineage>
        <taxon>Eukaryota</taxon>
        <taxon>Viridiplantae</taxon>
        <taxon>Streptophyta</taxon>
        <taxon>Embryophyta</taxon>
        <taxon>Tracheophyta</taxon>
        <taxon>Spermatophyta</taxon>
        <taxon>Magnoliopsida</taxon>
        <taxon>eudicotyledons</taxon>
        <taxon>Gunneridae</taxon>
        <taxon>Pentapetalae</taxon>
        <taxon>rosids</taxon>
        <taxon>malvids</taxon>
        <taxon>Brassicales</taxon>
        <taxon>Brassicaceae</taxon>
        <taxon>Camelineae</taxon>
        <taxon>Arabidopsis</taxon>
    </lineage>
</organism>
<accession>F4I837</accession>
<accession>Q0WPG4</accession>
<accession>Q9FVU5</accession>
<gene>
    <name type="primary">JAL14</name>
    <name type="ordered locus">At1g57570</name>
    <name type="ORF">T8L23.4</name>
</gene>
<sequence>MERNLLSILMRRRLAERNRDAIELAAVQKMEVIGSTEGYTFDDGSDHDDVTKIFVGGGRQGIHYIEFEYVKNGQLESGVHLGVRYRGFTETFEINHLNNEHLESVEGYYDYGSGYIQGLQFKTNFRVSELIGYDEGTKFSLSVKGKRIIGFHGYMKERKIISLGGYFSWIHPRKMEAKGSKGGNQWDDGTNNDGVTKIHVRGGVEGIQYIKFDYVRKSGQHINGSIHGLSGSGFTQTFEIDHLNNEHLVCVEGYYDDESGVIQALQFKTNIKTSELLGYKKGKKFSLVDKRKKIVGFHGYADKNLNSLGAYFTTVSPTKSECYGSSKGIYWDDGVFDFIRTVYVSSNVMNVRYIKFHYYNRAVVVRQHGWNSIVEEDGEKEFELDYPNELITSVEGTMKSFSRSEIRISSLTFKTSKGRTSPTIGIASGTKFLLASKGCAVVGFYGRHDDRDLVAIGAYFSPLPPPTAEKLQAQGGNQGDSWDDGVFEGVRKLYVGQGKNCVAFLKVVYDSNTQVVIGEDHGNKTLFEVKEYELEYPSEYITAVDGCYNKVNGTEVEVITMLRIQTNKRTSIPVGCESNSSFVLKKEGYKIVGFHGKASNMINQLGVHVVPLTE</sequence>
<protein>
    <recommendedName>
        <fullName>Jacalin-related lectin 14</fullName>
    </recommendedName>
</protein>